<name>BP53_BPT4</name>
<protein>
    <recommendedName>
        <fullName evidence="7">Baseplate wedge protein gp53</fullName>
    </recommendedName>
    <alternativeName>
        <fullName evidence="7">Gene product 53</fullName>
        <shortName>gp53</shortName>
    </alternativeName>
</protein>
<comment type="function">
    <text evidence="1 5 6">Baseplate protein that is located next to the tail tube (inner baseplate). Involved in the tail assembly. Involved in the tail assembly.</text>
</comment>
<comment type="subunit">
    <text evidence="3 4 5">Part of the baseplate macromolecular complex which consists of gp5, gp5.4, gp27 (central spike complex); gp6, gp25, gp53 (inner baseplate); gp7, gp8 (intermediate baseplate); gp9, gp10, gp11, gp12 (peripheral); gp48 and gp54 (proximal region of the tail tube). Interacts with gp25 and with the (gp6)2-gp7 heterotrimeric molecule.</text>
</comment>
<comment type="subcellular location">
    <subcellularLocation>
        <location evidence="1 2 4 5">Virion</location>
    </subcellularLocation>
    <text evidence="6">Present in 6 copies in the baseplate.</text>
</comment>
<comment type="induction">
    <text evidence="7">Expressed in the late phase of the viral replicative cycle.</text>
</comment>
<accession>P16011</accession>
<proteinExistence type="evidence at protein level"/>
<dbReference type="EMBL" id="X15728">
    <property type="protein sequence ID" value="CAA33748.1"/>
    <property type="molecule type" value="Genomic_DNA"/>
</dbReference>
<dbReference type="EMBL" id="X14845">
    <property type="protein sequence ID" value="CAA32949.1"/>
    <property type="molecule type" value="Genomic_DNA"/>
</dbReference>
<dbReference type="EMBL" id="AF158101">
    <property type="protein sequence ID" value="AAD42489.1"/>
    <property type="molecule type" value="Genomic_DNA"/>
</dbReference>
<dbReference type="PIR" id="S25239">
    <property type="entry name" value="GPBP84"/>
</dbReference>
<dbReference type="RefSeq" id="NP_049756.1">
    <property type="nucleotide sequence ID" value="NC_000866.4"/>
</dbReference>
<dbReference type="PDB" id="5HX2">
    <property type="method" value="EM"/>
    <property type="resolution" value="3.80 A"/>
    <property type="chains" value="F=1-196"/>
</dbReference>
<dbReference type="PDB" id="5IV5">
    <property type="method" value="EM"/>
    <property type="resolution" value="4.11 A"/>
    <property type="chains" value="BF/DI/GB/IE/V/s=1-196"/>
</dbReference>
<dbReference type="PDB" id="5IV7">
    <property type="method" value="EM"/>
    <property type="resolution" value="6.77 A"/>
    <property type="chains" value="BE/DG/GB/P/f/v=1-196"/>
</dbReference>
<dbReference type="PDBsum" id="5HX2"/>
<dbReference type="PDBsum" id="5IV5"/>
<dbReference type="PDBsum" id="5IV7"/>
<dbReference type="EMDB" id="EMD-8064"/>
<dbReference type="SMR" id="P16011"/>
<dbReference type="TCDB" id="1.K.1.1.1">
    <property type="family name" value="the gp27/5 t4-baseplate (t4-bp) family"/>
</dbReference>
<dbReference type="GeneID" id="1258693"/>
<dbReference type="KEGG" id="vg:1258693"/>
<dbReference type="OrthoDB" id="8952at10239"/>
<dbReference type="EvolutionaryTrace" id="P16011"/>
<dbReference type="Proteomes" id="UP000009087">
    <property type="component" value="Segment"/>
</dbReference>
<dbReference type="GO" id="GO:0098025">
    <property type="term" value="C:virus tail, baseplate"/>
    <property type="evidence" value="ECO:0000314"/>
    <property type="project" value="UniProtKB"/>
</dbReference>
<dbReference type="GO" id="GO:0098003">
    <property type="term" value="P:viral tail assembly"/>
    <property type="evidence" value="ECO:0007669"/>
    <property type="project" value="UniProtKB-KW"/>
</dbReference>
<dbReference type="InterPro" id="IPR022607">
    <property type="entry name" value="Phage_T4_Gp53_baseplate_wedge"/>
</dbReference>
<dbReference type="Pfam" id="PF11246">
    <property type="entry name" value="Phage_gp53"/>
    <property type="match status" value="1"/>
</dbReference>
<keyword id="KW-0002">3D-structure</keyword>
<keyword id="KW-0903">Direct protein sequencing</keyword>
<keyword id="KW-0426">Late protein</keyword>
<keyword id="KW-1185">Reference proteome</keyword>
<keyword id="KW-1226">Viral baseplate protein</keyword>
<keyword id="KW-1188">Viral release from host cell</keyword>
<keyword id="KW-1245">Viral tail assembly</keyword>
<keyword id="KW-1227">Viral tail protein</keyword>
<keyword id="KW-0946">Virion</keyword>
<organism>
    <name type="scientific">Enterobacteria phage T4</name>
    <name type="common">Bacteriophage T4</name>
    <dbReference type="NCBI Taxonomy" id="10665"/>
    <lineage>
        <taxon>Viruses</taxon>
        <taxon>Duplodnaviria</taxon>
        <taxon>Heunggongvirae</taxon>
        <taxon>Uroviricota</taxon>
        <taxon>Caudoviricetes</taxon>
        <taxon>Straboviridae</taxon>
        <taxon>Tevenvirinae</taxon>
        <taxon>Tequatrovirus</taxon>
    </lineage>
</organism>
<sequence length="196" mass="22966">MLFTFFDPIEYAAKTVNKNAPTIPMTDIFRNYKDYFKRALAGYRLRTYYIKGSPRPEELANAIYGNPQLYWVLLMCNDNYDPYYGWITSQEAAYQASIQKYKNVGGDQIVYHVNENGEKFYNLISYDDNPYVWYDKGDKARKYPQYEGALAAVDTYEAAVLENEKLRQIKIIAKSDINSFMNDLIRIMEKSYGNDK</sequence>
<organismHost>
    <name type="scientific">Escherichia coli</name>
    <dbReference type="NCBI Taxonomy" id="562"/>
</organismHost>
<reference key="1">
    <citation type="journal article" date="1989" name="New Biol.">
        <title>Functional relationships and structural determinants of two bacteriophage T4 lysozymes: a soluble (gene e) and a baseplate-associated (gene 5) protein.</title>
        <authorList>
            <person name="Mosig G."/>
            <person name="Lin G.W."/>
            <person name="Franklin J."/>
            <person name="Fan W.H."/>
        </authorList>
    </citation>
    <scope>NUCLEOTIDE SEQUENCE [GENOMIC DNA]</scope>
</reference>
<reference key="2">
    <citation type="journal article" date="1989" name="Nucleic Acids Res.">
        <title>Sequencing, cloning and overexpression of genes of bacteriophage T4 between map positions 74.325 and 77.184.</title>
        <authorList>
            <person name="Koch T."/>
            <person name="Lamm N."/>
            <person name="Rueger W."/>
        </authorList>
    </citation>
    <scope>NUCLEOTIDE SEQUENCE [GENOMIC DNA]</scope>
</reference>
<reference key="3">
    <citation type="journal article" date="2003" name="Microbiol. Mol. Biol. Rev.">
        <title>Bacteriophage T4 genome.</title>
        <authorList>
            <person name="Miller E.S."/>
            <person name="Kutter E."/>
            <person name="Mosig G."/>
            <person name="Arisaka F."/>
            <person name="Kunisawa T."/>
            <person name="Ruger W."/>
        </authorList>
    </citation>
    <scope>NUCLEOTIDE SEQUENCE [LARGE SCALE GENOMIC DNA]</scope>
</reference>
<reference key="4">
    <citation type="journal article" date="2004" name="J. Bacteriol.">
        <title>Processing of the tail lysozyme (gp5) of bacteriophage T4.</title>
        <authorList>
            <person name="Ye N."/>
            <person name="Nemoto N."/>
        </authorList>
    </citation>
    <scope>PROTEIN SEQUENCE OF 1-6</scope>
    <scope>SUBCELLULAR LOCATION</scope>
</reference>
<reference key="5">
    <citation type="journal article" date="1990" name="J. Virol.">
        <title>Structure of the bacteriophage T4 baseplate as determined by chemical cross-linking.</title>
        <authorList>
            <person name="Watts N.R."/>
            <person name="Coombs D.H."/>
        </authorList>
    </citation>
    <scope>SUBCELLULAR LOCATION</scope>
    <scope>SUBUNIT</scope>
</reference>
<reference key="6">
    <citation type="journal article" date="2003" name="Cell. Mol. Life Sci.">
        <title>Structure and morphogenesis of bacteriophage T4.</title>
        <authorList>
            <person name="Leiman P.G."/>
            <person name="Kanamaru S."/>
            <person name="Mesyanzhinov V.V."/>
            <person name="Arisaka F."/>
            <person name="Rossmann M.G."/>
        </authorList>
    </citation>
    <scope>REVIEW</scope>
</reference>
<reference key="7">
    <citation type="journal article" date="2010" name="Virol. J.">
        <title>Morphogenesis of the T4 tail and tail fibers.</title>
        <authorList>
            <person name="Leiman P.G."/>
            <person name="Arisaka F."/>
            <person name="van Raaij M.J."/>
            <person name="Kostyuchenko V.A."/>
            <person name="Aksyuk A.A."/>
            <person name="Kanamaru S."/>
            <person name="Rossmann M.G."/>
        </authorList>
    </citation>
    <scope>REVIEW ON FUNCTION</scope>
</reference>
<reference key="8">
    <citation type="journal article" date="2010" name="J. Mol. Biol.">
        <title>The baseplate wedges of bacteriophage T4 spontaneously assemble into hubless baseplate-like structure in vitro.</title>
        <authorList>
            <person name="Yap M.L."/>
            <person name="Mio K."/>
            <person name="Leiman P.G."/>
            <person name="Kanamaru S."/>
            <person name="Arisaka F."/>
        </authorList>
    </citation>
    <scope>SUBUNIT</scope>
</reference>
<reference key="9">
    <citation type="journal article" date="2004" name="Cell">
        <title>Three-dimensional rearrangement of proteins in the tail of bacteriophage T4 on infection of its host.</title>
        <authorList>
            <person name="Leiman P.G."/>
            <person name="Chipman P.R."/>
            <person name="Kostyuchenko V.A."/>
            <person name="Mesyanzhinov V.V."/>
            <person name="Rossmann M.G."/>
        </authorList>
    </citation>
    <scope>STRUCTURE BY ELECTRON MICROSCOPY (17.0 ANGSTROMS) OF THE CONTRACTED TAIL</scope>
    <scope>SUBCELLULAR LOCATION</scope>
    <scope>FUNCTION</scope>
</reference>
<reference key="10">
    <citation type="journal article" date="2016" name="Nature">
        <title>Structure of the T4 baseplate and its function in triggering sheath contraction.</title>
        <authorList>
            <person name="Taylor N.M."/>
            <person name="Prokhorov N.S."/>
            <person name="Guerrero-Ferreira R.C."/>
            <person name="Shneider M.M."/>
            <person name="Browning C."/>
            <person name="Goldie K.N."/>
            <person name="Stahlberg H."/>
            <person name="Leiman P.G."/>
        </authorList>
    </citation>
    <scope>STRUCTURE BY ELECTRON MICROSCOPY (4.11 ANGSTROMS)</scope>
    <scope>SUBUNIT</scope>
    <scope>SUBCELLULAR LOCATION</scope>
    <scope>FUNCTION</scope>
</reference>
<evidence type="ECO:0000269" key="1">
    <source>
    </source>
</evidence>
<evidence type="ECO:0000269" key="2">
    <source>
    </source>
</evidence>
<evidence type="ECO:0000269" key="3">
    <source>
    </source>
</evidence>
<evidence type="ECO:0000269" key="4">
    <source>
    </source>
</evidence>
<evidence type="ECO:0000269" key="5">
    <source>
    </source>
</evidence>
<evidence type="ECO:0000303" key="6">
    <source>
    </source>
</evidence>
<evidence type="ECO:0000305" key="7"/>
<feature type="chain" id="PRO_0000165042" description="Baseplate wedge protein gp53">
    <location>
        <begin position="1"/>
        <end position="196"/>
    </location>
</feature>
<gene>
    <name type="primary">53</name>
</gene>